<name>FAD12_TRICA</name>
<protein>
    <recommendedName>
        <fullName evidence="8">Acyl-CoA Delta-12 desaturase</fullName>
        <ecNumber evidence="7 10">1.14.19.6</ecNumber>
    </recommendedName>
    <alternativeName>
        <fullName evidence="13">Acyl-CoA Delta(11) desaturase-like Protein</fullName>
    </alternativeName>
</protein>
<feature type="chain" id="PRO_0000452362" description="Acyl-CoA Delta-12 desaturase">
    <location>
        <begin position="1"/>
        <end position="358"/>
    </location>
</feature>
<feature type="transmembrane region" description="Helical" evidence="4">
    <location>
        <begin position="30"/>
        <end position="50"/>
    </location>
</feature>
<feature type="transmembrane region" description="Helical" evidence="4">
    <location>
        <begin position="55"/>
        <end position="75"/>
    </location>
</feature>
<feature type="transmembrane region" description="Helical" evidence="4">
    <location>
        <begin position="175"/>
        <end position="195"/>
    </location>
</feature>
<feature type="transmembrane region" description="Helical" evidence="4">
    <location>
        <begin position="200"/>
        <end position="220"/>
    </location>
</feature>
<feature type="short sequence motif" description="Histidine box-1" evidence="3">
    <location>
        <begin position="75"/>
        <end position="80"/>
    </location>
</feature>
<feature type="short sequence motif" description="Histidine box-2" evidence="3">
    <location>
        <begin position="112"/>
        <end position="116"/>
    </location>
</feature>
<feature type="short sequence motif" description="Histidine box-3" evidence="3">
    <location>
        <begin position="254"/>
        <end position="258"/>
    </location>
</feature>
<feature type="binding site" evidence="2">
    <location>
        <position position="75"/>
    </location>
    <ligand>
        <name>Fe cation</name>
        <dbReference type="ChEBI" id="CHEBI:24875"/>
        <label>1</label>
    </ligand>
</feature>
<feature type="binding site" evidence="2">
    <location>
        <position position="80"/>
    </location>
    <ligand>
        <name>Fe cation</name>
        <dbReference type="ChEBI" id="CHEBI:24875"/>
        <label>1</label>
    </ligand>
</feature>
<feature type="binding site" evidence="2">
    <location>
        <position position="112"/>
    </location>
    <ligand>
        <name>Fe cation</name>
        <dbReference type="ChEBI" id="CHEBI:24875"/>
        <label>1</label>
    </ligand>
</feature>
<feature type="binding site" evidence="2">
    <location>
        <position position="115"/>
    </location>
    <ligand>
        <name>Fe cation</name>
        <dbReference type="ChEBI" id="CHEBI:24875"/>
        <label>2</label>
    </ligand>
</feature>
<feature type="binding site" evidence="2">
    <location>
        <position position="116"/>
    </location>
    <ligand>
        <name>Fe cation</name>
        <dbReference type="ChEBI" id="CHEBI:24875"/>
        <label>1</label>
    </ligand>
</feature>
<feature type="binding site" evidence="2">
    <location>
        <position position="225"/>
    </location>
    <ligand>
        <name>Fe cation</name>
        <dbReference type="ChEBI" id="CHEBI:24875"/>
        <label>2</label>
    </ligand>
</feature>
<feature type="binding site" evidence="2">
    <location>
        <position position="254"/>
    </location>
    <ligand>
        <name>Fe cation</name>
        <dbReference type="ChEBI" id="CHEBI:24875"/>
        <label>2</label>
    </ligand>
</feature>
<feature type="binding site" evidence="2">
    <location>
        <position position="257"/>
    </location>
    <ligand>
        <name>Fe cation</name>
        <dbReference type="ChEBI" id="CHEBI:24875"/>
        <label>1</label>
    </ligand>
</feature>
<feature type="binding site" evidence="2">
    <location>
        <position position="258"/>
    </location>
    <ligand>
        <name>Fe cation</name>
        <dbReference type="ChEBI" id="CHEBI:24875"/>
        <label>2</label>
    </ligand>
</feature>
<proteinExistence type="evidence at protein level"/>
<dbReference type="EC" id="1.14.19.6" evidence="7 10"/>
<dbReference type="EMBL" id="EU159449">
    <property type="protein sequence ID" value="ABY26958.1"/>
    <property type="molecule type" value="mRNA"/>
</dbReference>
<dbReference type="EMBL" id="KQ971322">
    <property type="protein sequence ID" value="EFA00770.1"/>
    <property type="molecule type" value="Genomic_DNA"/>
</dbReference>
<dbReference type="RefSeq" id="NP_001137206.1">
    <property type="nucleotide sequence ID" value="NM_001143734.1"/>
</dbReference>
<dbReference type="RefSeq" id="XP_008191083.1">
    <property type="nucleotide sequence ID" value="XM_008192861.2"/>
</dbReference>
<dbReference type="RefSeq" id="XP_008191084.1">
    <property type="nucleotide sequence ID" value="XM_008192862.2"/>
</dbReference>
<dbReference type="RefSeq" id="XP_008191086.1">
    <property type="nucleotide sequence ID" value="XM_008192864.2"/>
</dbReference>
<dbReference type="RefSeq" id="XP_015833598.1">
    <property type="nucleotide sequence ID" value="XM_015978112.1"/>
</dbReference>
<dbReference type="SMR" id="B7SB92"/>
<dbReference type="STRING" id="7070.B7SB92"/>
<dbReference type="EnsemblMetazoa" id="TC003656_001">
    <property type="protein sequence ID" value="TC003656_001"/>
    <property type="gene ID" value="TC003656"/>
</dbReference>
<dbReference type="GeneID" id="100233160"/>
<dbReference type="KEGG" id="tca:100233160"/>
<dbReference type="CTD" id="100233160"/>
<dbReference type="eggNOG" id="KOG1600">
    <property type="taxonomic scope" value="Eukaryota"/>
</dbReference>
<dbReference type="HOGENOM" id="CLU_027359_0_2_1"/>
<dbReference type="InParanoid" id="B7SB92"/>
<dbReference type="OMA" id="VIDWTEY"/>
<dbReference type="PhylomeDB" id="B7SB92"/>
<dbReference type="Proteomes" id="UP000007266">
    <property type="component" value="Linkage group 3"/>
</dbReference>
<dbReference type="GO" id="GO:0005789">
    <property type="term" value="C:endoplasmic reticulum membrane"/>
    <property type="evidence" value="ECO:0000318"/>
    <property type="project" value="GO_Central"/>
</dbReference>
<dbReference type="GO" id="GO:0102985">
    <property type="term" value="F:acyl-CoA (9+3)-desaturase activity"/>
    <property type="evidence" value="ECO:0007669"/>
    <property type="project" value="UniProtKB-EC"/>
</dbReference>
<dbReference type="GO" id="GO:0005506">
    <property type="term" value="F:iron ion binding"/>
    <property type="evidence" value="ECO:0000318"/>
    <property type="project" value="GO_Central"/>
</dbReference>
<dbReference type="GO" id="GO:0004768">
    <property type="term" value="F:stearoyl-CoA 9-desaturase activity"/>
    <property type="evidence" value="ECO:0000318"/>
    <property type="project" value="GO_Central"/>
</dbReference>
<dbReference type="GO" id="GO:0006636">
    <property type="term" value="P:unsaturated fatty acid biosynthetic process"/>
    <property type="evidence" value="ECO:0000318"/>
    <property type="project" value="GO_Central"/>
</dbReference>
<dbReference type="CDD" id="cd03505">
    <property type="entry name" value="Delta9-FADS-like"/>
    <property type="match status" value="1"/>
</dbReference>
<dbReference type="InterPro" id="IPR015876">
    <property type="entry name" value="Acyl-CoA_DS"/>
</dbReference>
<dbReference type="PANTHER" id="PTHR11351">
    <property type="entry name" value="ACYL-COA DESATURASE"/>
    <property type="match status" value="1"/>
</dbReference>
<dbReference type="PANTHER" id="PTHR11351:SF98">
    <property type="entry name" value="RE43130P"/>
    <property type="match status" value="1"/>
</dbReference>
<dbReference type="PRINTS" id="PR00075">
    <property type="entry name" value="FACDDSATRASE"/>
</dbReference>
<sequence length="358" mass="42475">MSAQTITTTETTQNAQKPQQYHWRMVWRNIILYIIMHLTGFYGLYLAMFYAQWKTVFYSWFLLVIALQGVTAGSHRLWAHKAYKARLPLRMLLCIFQTLSLQNHIYDWATYHRVHHKFVDTNADPHNSRRGFFFSHMGWLFIEPHKDVEDKYKSIDFSDLHADSVVMIQKKYYHTFFAPVIGFYLPAAIPWYFWGENFWTAFFVATMLRYCACTNITFLVNSWAHIYGSRPYDKNIYPTESATIAVLTGGEGWHNYHHTFPWDYKTGEFGKYRSNLTTGFLDFMAAIGWAYDLKTVSEEMIMKRVLRTGDGTRKFDKIDKILNVDDDHHHEDMLWGWGDSDMAKEEMNYVKIHNRKED</sequence>
<gene>
    <name evidence="12" type="primary">D12Des</name>
    <name evidence="13" type="ORF">TcasGA2_TC003656</name>
</gene>
<reference key="1">
    <citation type="journal article" date="2008" name="Insect Mol. Biol.">
        <title>Isolation and functional characterization of two independently-evolved fatty acid Delta12-desaturase genes from insects.</title>
        <authorList>
            <person name="Zhou X.-R."/>
            <person name="Horne I."/>
            <person name="Damcevski K."/>
            <person name="Haritos V."/>
            <person name="Green A."/>
            <person name="Singh S."/>
        </authorList>
    </citation>
    <scope>NUCLEOTIDE SEQUENCE [MRNA]</scope>
    <scope>FUNCTION</scope>
    <scope>CATALYTIC ACTIVITY</scope>
</reference>
<reference key="2">
    <citation type="submission" date="2014-11" db="EMBL/GenBank/DDBJ databases">
        <title>Tools and pipelines for BioNano data: molecule assembly pipeline and FASTA super scaffolding tool.</title>
        <authorList>
            <person name="Shelton J.M."/>
            <person name="Herndon N."/>
            <person name="Coleman C."/>
            <person name="Lu N."/>
            <person name="Brown S.J."/>
        </authorList>
    </citation>
    <scope>NUCLEOTIDE SEQUENCE [GENOMIC DNA]</scope>
    <source>
        <strain evidence="13">Georgia GA2</strain>
    </source>
</reference>
<reference key="3">
    <citation type="journal article" date="2008" name="Nature">
        <title>The genome of the model beetle and pest Tribolium castaneum.</title>
        <authorList>
            <consortium name="Tribolium Genome Sequencing Consortium"/>
            <person name="Richards S."/>
            <person name="Gibbs R.A."/>
            <person name="Weinstock G.M."/>
            <person name="Brown S.J."/>
            <person name="Denell R."/>
            <person name="Beeman R.W."/>
            <person name="Gibbs R."/>
            <person name="Beeman R.W."/>
            <person name="Brown S.J."/>
            <person name="Bucher G."/>
            <person name="Friedrich M."/>
            <person name="Grimmelikhuijzen C.J."/>
            <person name="Klingler M."/>
            <person name="Lorenzen M."/>
            <person name="Richards S."/>
            <person name="Roth S."/>
            <person name="Schroder R."/>
            <person name="Tautz D."/>
            <person name="Zdobnov E.M."/>
            <person name="Muzny D."/>
            <person name="Gibbs R.A."/>
            <person name="Weinstock G.M."/>
            <person name="Attaway T."/>
            <person name="Bell S."/>
            <person name="Buhay C.J."/>
            <person name="Chandrabose M.N."/>
            <person name="Chavez D."/>
            <person name="Clerk-Blankenburg K.P."/>
            <person name="Cree A."/>
            <person name="Dao M."/>
            <person name="Davis C."/>
            <person name="Chacko J."/>
            <person name="Dinh H."/>
            <person name="Dugan-Rocha S."/>
            <person name="Fowler G."/>
            <person name="Garner T.T."/>
            <person name="Garnes J."/>
            <person name="Gnirke A."/>
            <person name="Hawes A."/>
            <person name="Hernandez J."/>
            <person name="Hines S."/>
            <person name="Holder M."/>
            <person name="Hume J."/>
            <person name="Jhangiani S.N."/>
            <person name="Joshi V."/>
            <person name="Khan Z.M."/>
            <person name="Jackson L."/>
            <person name="Kovar C."/>
            <person name="Kowis A."/>
            <person name="Lee S."/>
            <person name="Lewis L.R."/>
            <person name="Margolis J."/>
            <person name="Morgan M."/>
            <person name="Nazareth L.V."/>
            <person name="Nguyen N."/>
            <person name="Okwuonu G."/>
            <person name="Parker D."/>
            <person name="Richards S."/>
            <person name="Ruiz S.J."/>
            <person name="Santibanez J."/>
            <person name="Savard J."/>
            <person name="Scherer S.E."/>
            <person name="Schneider B."/>
            <person name="Sodergren E."/>
            <person name="Tautz D."/>
            <person name="Vattahil S."/>
            <person name="Villasana D."/>
            <person name="White C.S."/>
            <person name="Wright R."/>
            <person name="Park Y."/>
            <person name="Beeman R.W."/>
            <person name="Lord J."/>
            <person name="Oppert B."/>
            <person name="Lorenzen M."/>
            <person name="Brown S."/>
            <person name="Wang L."/>
            <person name="Savard J."/>
            <person name="Tautz D."/>
            <person name="Richards S."/>
            <person name="Weinstock G."/>
            <person name="Gibbs R.A."/>
            <person name="Liu Y."/>
            <person name="Worley K."/>
            <person name="Weinstock G."/>
            <person name="Elsik C.G."/>
            <person name="Reese J.T."/>
            <person name="Elhaik E."/>
            <person name="Landan G."/>
            <person name="Graur D."/>
            <person name="Arensburger P."/>
            <person name="Atkinson P."/>
            <person name="Beeman R.W."/>
            <person name="Beidler J."/>
            <person name="Brown S.J."/>
            <person name="Demuth J.P."/>
            <person name="Drury D.W."/>
            <person name="Du Y.Z."/>
            <person name="Fujiwara H."/>
            <person name="Lorenzen M."/>
            <person name="Maselli V."/>
            <person name="Osanai M."/>
            <person name="Park Y."/>
            <person name="Robertson H.M."/>
            <person name="Tu Z."/>
            <person name="Wang J.J."/>
            <person name="Wang S."/>
            <person name="Richards S."/>
            <person name="Song H."/>
            <person name="Zhang L."/>
            <person name="Sodergren E."/>
            <person name="Werner D."/>
            <person name="Stanke M."/>
            <person name="Morgenstern B."/>
            <person name="Solovyev V."/>
            <person name="Kosarev P."/>
            <person name="Brown G."/>
            <person name="Chen H.C."/>
            <person name="Ermolaeva O."/>
            <person name="Hlavina W."/>
            <person name="Kapustin Y."/>
            <person name="Kiryutin B."/>
            <person name="Kitts P."/>
            <person name="Maglott D."/>
            <person name="Pruitt K."/>
            <person name="Sapojnikov V."/>
            <person name="Souvorov A."/>
            <person name="Mackey A.J."/>
            <person name="Waterhouse R.M."/>
            <person name="Wyder S."/>
            <person name="Zdobnov E.M."/>
            <person name="Zdobnov E.M."/>
            <person name="Wyder S."/>
            <person name="Kriventseva E.V."/>
            <person name="Kadowaki T."/>
            <person name="Bork P."/>
            <person name="Aranda M."/>
            <person name="Bao R."/>
            <person name="Beermann A."/>
            <person name="Berns N."/>
            <person name="Bolognesi R."/>
            <person name="Bonneton F."/>
            <person name="Bopp D."/>
            <person name="Brown S.J."/>
            <person name="Bucher G."/>
            <person name="Butts T."/>
            <person name="Chaumot A."/>
            <person name="Denell R.E."/>
            <person name="Ferrier D.E."/>
            <person name="Friedrich M."/>
            <person name="Gordon C.M."/>
            <person name="Jindra M."/>
            <person name="Klingler M."/>
            <person name="Lan Q."/>
            <person name="Lattorff H.M."/>
            <person name="Laudet V."/>
            <person name="von Levetsow C."/>
            <person name="Liu Z."/>
            <person name="Lutz R."/>
            <person name="Lynch J.A."/>
            <person name="da Fonseca R.N."/>
            <person name="Posnien N."/>
            <person name="Reuter R."/>
            <person name="Roth S."/>
            <person name="Savard J."/>
            <person name="Schinko J.B."/>
            <person name="Schmitt C."/>
            <person name="Schoppmeier M."/>
            <person name="Schroder R."/>
            <person name="Shippy T.D."/>
            <person name="Simonnet F."/>
            <person name="Marques-Souza H."/>
            <person name="Tautz D."/>
            <person name="Tomoyasu Y."/>
            <person name="Trauner J."/>
            <person name="Van der Zee M."/>
            <person name="Vervoort M."/>
            <person name="Wittkopp N."/>
            <person name="Wimmer E.A."/>
            <person name="Yang X."/>
            <person name="Jones A.K."/>
            <person name="Sattelle D.B."/>
            <person name="Ebert P.R."/>
            <person name="Nelson D."/>
            <person name="Scott J.G."/>
            <person name="Beeman R.W."/>
            <person name="Muthukrishnan S."/>
            <person name="Kramer K.J."/>
            <person name="Arakane Y."/>
            <person name="Beeman R.W."/>
            <person name="Zhu Q."/>
            <person name="Hogenkamp D."/>
            <person name="Dixit R."/>
            <person name="Oppert B."/>
            <person name="Jiang H."/>
            <person name="Zou Z."/>
            <person name="Marshall J."/>
            <person name="Elpidina E."/>
            <person name="Vinokurov K."/>
            <person name="Oppert C."/>
            <person name="Zou Z."/>
            <person name="Evans J."/>
            <person name="Lu Z."/>
            <person name="Zhao P."/>
            <person name="Sumathipala N."/>
            <person name="Altincicek B."/>
            <person name="Vilcinskas A."/>
            <person name="Williams M."/>
            <person name="Hultmark D."/>
            <person name="Hetru C."/>
            <person name="Jiang H."/>
            <person name="Grimmelikhuijzen C.J."/>
            <person name="Hauser F."/>
            <person name="Cazzamali G."/>
            <person name="Williamson M."/>
            <person name="Park Y."/>
            <person name="Li B."/>
            <person name="Tanaka Y."/>
            <person name="Predel R."/>
            <person name="Neupert S."/>
            <person name="Schachtner J."/>
            <person name="Verleyen P."/>
            <person name="Raible F."/>
            <person name="Bork P."/>
            <person name="Friedrich M."/>
            <person name="Walden K.K."/>
            <person name="Robertson H.M."/>
            <person name="Angeli S."/>
            <person name="Foret S."/>
            <person name="Bucher G."/>
            <person name="Schuetz S."/>
            <person name="Maleszka R."/>
            <person name="Wimmer E.A."/>
            <person name="Beeman R.W."/>
            <person name="Lorenzen M."/>
            <person name="Tomoyasu Y."/>
            <person name="Miller S.C."/>
            <person name="Grossmann D."/>
            <person name="Bucher G."/>
        </authorList>
    </citation>
    <scope>NUCLEOTIDE SEQUENCE [LARGE SCALE GENOMIC DNA]</scope>
    <source>
        <strain evidence="13 14">Georgia GA2</strain>
    </source>
</reference>
<reference key="4">
    <citation type="journal article" date="2010" name="Nucleic Acids Res.">
        <title>BeetleBase in 2010: revisions to provide comprehensive genomic information for Tribolium castaneum.</title>
        <authorList>
            <person name="Kim H.S."/>
            <person name="Murphy T."/>
            <person name="Xia J."/>
            <person name="Caragea D."/>
            <person name="Park Y."/>
            <person name="Beeman R.W."/>
            <person name="Lorenzen M.D."/>
            <person name="Butcher S."/>
            <person name="Manak J.R."/>
            <person name="Brown S.J."/>
        </authorList>
    </citation>
    <scope>GENOME REANNOTATION</scope>
    <source>
        <strain evidence="13 14">Georgia GA2</strain>
    </source>
</reference>
<reference key="5">
    <citation type="journal article" date="2011" name="J. Biol. Chem.">
        <title>Mechanistic and structural insights into the regioselectivity of an acyl-CoA fatty acid desaturase via directed molecular evolution.</title>
        <authorList>
            <person name="Vanhercke T."/>
            <person name="Shrestha P."/>
            <person name="Green A.G."/>
            <person name="Singh S.P."/>
        </authorList>
    </citation>
    <scope>CATALYTIC ACTIVITY</scope>
</reference>
<comment type="function">
    <text evidence="6">Catalyzes the formation of a Delta12 double bond, acting on monounsaturated fatty acyl substrates like palmitoleoyl-CoA ((9Z)-hexadecenoyl-CoA) and oleoyl-CoA ((9Z)-octadecenoyl-CoA) with higher desaturation activity on (9Z)-octadecenoyl-CoA than (9Z)-hexadecenoyl-CoA. Requires preexisting cis double bond at the Delta9 position of fatty acyls to be able to insert the Delta12 double bond. Delta12-desaturation of (9Z)-octadecenoyl-CoA in insects produces (9Z,12Z)-octadecadienoyl-CoA (linoleoyl-CoA) which may be used to supply precursors of crucial mediators of immunity and reproduction and other essential functions.</text>
</comment>
<comment type="catalytic activity">
    <reaction evidence="7 10">
        <text>(9Z)-octadecenoyl-CoA + 2 Fe(II)-[cytochrome b5] + O2 + 2 H(+) = (9Z,12Z)-octadecadienoyl-CoA + 2 Fe(III)-[cytochrome b5] + 2 H2O</text>
        <dbReference type="Rhea" id="RHEA:25856"/>
        <dbReference type="Rhea" id="RHEA-COMP:10438"/>
        <dbReference type="Rhea" id="RHEA-COMP:10439"/>
        <dbReference type="ChEBI" id="CHEBI:15377"/>
        <dbReference type="ChEBI" id="CHEBI:15378"/>
        <dbReference type="ChEBI" id="CHEBI:15379"/>
        <dbReference type="ChEBI" id="CHEBI:29033"/>
        <dbReference type="ChEBI" id="CHEBI:29034"/>
        <dbReference type="ChEBI" id="CHEBI:57383"/>
        <dbReference type="ChEBI" id="CHEBI:57387"/>
        <dbReference type="EC" id="1.14.19.6"/>
    </reaction>
    <physiologicalReaction direction="left-to-right" evidence="10 11">
        <dbReference type="Rhea" id="RHEA:25857"/>
    </physiologicalReaction>
</comment>
<comment type="catalytic activity">
    <reaction evidence="10">
        <text>(9Z)-hexadecenoyl-CoA + 2 Fe(II)-[cytochrome b5] + O2 + 2 H(+) = (9Z,12Z)-hexadecadienoyl-CoA + 2 Fe(III)-[cytochrome b5] + 2 H2O</text>
        <dbReference type="Rhea" id="RHEA:45096"/>
        <dbReference type="Rhea" id="RHEA-COMP:10438"/>
        <dbReference type="Rhea" id="RHEA-COMP:10439"/>
        <dbReference type="ChEBI" id="CHEBI:15377"/>
        <dbReference type="ChEBI" id="CHEBI:15378"/>
        <dbReference type="ChEBI" id="CHEBI:15379"/>
        <dbReference type="ChEBI" id="CHEBI:29033"/>
        <dbReference type="ChEBI" id="CHEBI:29034"/>
        <dbReference type="ChEBI" id="CHEBI:61540"/>
        <dbReference type="ChEBI" id="CHEBI:76552"/>
        <dbReference type="EC" id="1.14.19.6"/>
    </reaction>
    <physiologicalReaction direction="left-to-right" evidence="10">
        <dbReference type="Rhea" id="RHEA:45097"/>
    </physiologicalReaction>
</comment>
<comment type="cofactor">
    <cofactor evidence="1">
        <name>Fe(2+)</name>
        <dbReference type="ChEBI" id="CHEBI:29033"/>
    </cofactor>
    <text evidence="1">Expected to bind 2 Fe(2+) ions per subunit.</text>
</comment>
<comment type="subcellular location">
    <subcellularLocation>
        <location evidence="4">Membrane</location>
        <topology evidence="4">Multi-pass membrane protein</topology>
    </subcellularLocation>
</comment>
<comment type="domain">
    <text evidence="5">The histidine box domains may contain the active site and/or be involved in metal ion binding.</text>
</comment>
<comment type="similarity">
    <text evidence="9">Belongs to the fatty acid desaturase type 1 family.</text>
</comment>
<accession>B7SB92</accession>
<organism>
    <name type="scientific">Tribolium castaneum</name>
    <name type="common">Red flour beetle</name>
    <dbReference type="NCBI Taxonomy" id="7070"/>
    <lineage>
        <taxon>Eukaryota</taxon>
        <taxon>Metazoa</taxon>
        <taxon>Ecdysozoa</taxon>
        <taxon>Arthropoda</taxon>
        <taxon>Hexapoda</taxon>
        <taxon>Insecta</taxon>
        <taxon>Pterygota</taxon>
        <taxon>Neoptera</taxon>
        <taxon>Endopterygota</taxon>
        <taxon>Coleoptera</taxon>
        <taxon>Polyphaga</taxon>
        <taxon>Cucujiformia</taxon>
        <taxon>Tenebrionidae</taxon>
        <taxon>Tenebrionidae incertae sedis</taxon>
        <taxon>Tribolium</taxon>
    </lineage>
</organism>
<keyword id="KW-0275">Fatty acid biosynthesis</keyword>
<keyword id="KW-0276">Fatty acid metabolism</keyword>
<keyword id="KW-0408">Iron</keyword>
<keyword id="KW-0444">Lipid biosynthesis</keyword>
<keyword id="KW-0443">Lipid metabolism</keyword>
<keyword id="KW-0472">Membrane</keyword>
<keyword id="KW-0479">Metal-binding</keyword>
<keyword id="KW-0560">Oxidoreductase</keyword>
<keyword id="KW-1185">Reference proteome</keyword>
<keyword id="KW-0812">Transmembrane</keyword>
<keyword id="KW-1133">Transmembrane helix</keyword>
<evidence type="ECO:0000250" key="1">
    <source>
        <dbReference type="UniProtKB" id="O00767"/>
    </source>
</evidence>
<evidence type="ECO:0000250" key="2">
    <source>
        <dbReference type="UniProtKB" id="P13516"/>
    </source>
</evidence>
<evidence type="ECO:0000250" key="3">
    <source>
        <dbReference type="UniProtKB" id="Q6US81"/>
    </source>
</evidence>
<evidence type="ECO:0000255" key="4"/>
<evidence type="ECO:0000255" key="5">
    <source>
        <dbReference type="RuleBase" id="RU000581"/>
    </source>
</evidence>
<evidence type="ECO:0000269" key="6">
    <source>
    </source>
</evidence>
<evidence type="ECO:0000269" key="7">
    <source>
    </source>
</evidence>
<evidence type="ECO:0000303" key="8">
    <source>
    </source>
</evidence>
<evidence type="ECO:0000305" key="9"/>
<evidence type="ECO:0000305" key="10">
    <source>
    </source>
</evidence>
<evidence type="ECO:0000305" key="11">
    <source>
    </source>
</evidence>
<evidence type="ECO:0000312" key="12">
    <source>
        <dbReference type="EMBL" id="ABY26958.1"/>
    </source>
</evidence>
<evidence type="ECO:0000312" key="13">
    <source>
        <dbReference type="EMBL" id="EFA00770.1"/>
    </source>
</evidence>
<evidence type="ECO:0000312" key="14">
    <source>
        <dbReference type="Proteomes" id="UP000007266"/>
    </source>
</evidence>